<keyword id="KW-0002">3D-structure</keyword>
<keyword id="KW-0963">Cytoplasm</keyword>
<keyword id="KW-0489">Methyltransferase</keyword>
<keyword id="KW-1185">Reference proteome</keyword>
<keyword id="KW-0698">rRNA processing</keyword>
<keyword id="KW-0949">S-adenosyl-L-methionine</keyword>
<keyword id="KW-0808">Transferase</keyword>
<protein>
    <recommendedName>
        <fullName>Ribosomal RNA small subunit methyltransferase E</fullName>
        <ecNumber>2.1.1.193</ecNumber>
    </recommendedName>
    <alternativeName>
        <fullName>16S rRNA m3U1498 methyltransferase</fullName>
    </alternativeName>
</protein>
<name>RSME_ECOLI</name>
<evidence type="ECO:0000269" key="1">
    <source>
    </source>
</evidence>
<evidence type="ECO:0000269" key="2">
    <source>
    </source>
</evidence>
<evidence type="ECO:0000305" key="3"/>
<evidence type="ECO:0007829" key="4">
    <source>
        <dbReference type="PDB" id="4E8B"/>
    </source>
</evidence>
<reference key="1">
    <citation type="journal article" date="1997" name="Science">
        <title>The complete genome sequence of Escherichia coli K-12.</title>
        <authorList>
            <person name="Blattner F.R."/>
            <person name="Plunkett G. III"/>
            <person name="Bloch C.A."/>
            <person name="Perna N.T."/>
            <person name="Burland V."/>
            <person name="Riley M."/>
            <person name="Collado-Vides J."/>
            <person name="Glasner J.D."/>
            <person name="Rode C.K."/>
            <person name="Mayhew G.F."/>
            <person name="Gregor J."/>
            <person name="Davis N.W."/>
            <person name="Kirkpatrick H.A."/>
            <person name="Goeden M.A."/>
            <person name="Rose D.J."/>
            <person name="Mau B."/>
            <person name="Shao Y."/>
        </authorList>
    </citation>
    <scope>NUCLEOTIDE SEQUENCE [LARGE SCALE GENOMIC DNA]</scope>
    <source>
        <strain>K12 / MG1655 / ATCC 47076</strain>
    </source>
</reference>
<reference key="2">
    <citation type="journal article" date="2006" name="Mol. Syst. Biol.">
        <title>Highly accurate genome sequences of Escherichia coli K-12 strains MG1655 and W3110.</title>
        <authorList>
            <person name="Hayashi K."/>
            <person name="Morooka N."/>
            <person name="Yamamoto Y."/>
            <person name="Fujita K."/>
            <person name="Isono K."/>
            <person name="Choi S."/>
            <person name="Ohtsubo E."/>
            <person name="Baba T."/>
            <person name="Wanner B.L."/>
            <person name="Mori H."/>
            <person name="Horiuchi T."/>
        </authorList>
    </citation>
    <scope>NUCLEOTIDE SEQUENCE [LARGE SCALE GENOMIC DNA]</scope>
    <source>
        <strain>K12 / W3110 / ATCC 27325 / DSM 5911</strain>
    </source>
</reference>
<reference key="3">
    <citation type="journal article" date="1994" name="J. Bacteriol.">
        <title>Location of the endA gene coding for endonuclease I on the physical map of the Escherichia coli K-12 chromosome.</title>
        <authorList>
            <person name="Jekel M."/>
            <person name="Wackernagel W."/>
        </authorList>
    </citation>
    <scope>NUCLEOTIDE SEQUENCE [GENOMIC DNA] OF 1-128</scope>
    <source>
        <strain>K12</strain>
    </source>
</reference>
<reference key="4">
    <citation type="journal article" date="1984" name="Nucleic Acids Res.">
        <title>Complete nucleotide sequence of the E. coli glutathione synthetase gsh-II.</title>
        <authorList>
            <person name="Gushima H."/>
            <person name="Yasuda S."/>
            <person name="Soeda E."/>
            <person name="Yokota M."/>
            <person name="Kondo M."/>
            <person name="Kimura A."/>
        </authorList>
    </citation>
    <scope>NUCLEOTIDE SEQUENCE [GENOMIC DNA] OF 127-243</scope>
    <source>
        <strain>B</strain>
    </source>
</reference>
<reference key="5">
    <citation type="unpublished observations" date="1994-08">
        <authorList>
            <person name="Rudd K.E."/>
            <person name="Baum B."/>
        </authorList>
    </citation>
    <scope>IDENTIFICATION</scope>
</reference>
<reference key="6">
    <citation type="journal article" date="2006" name="RNA">
        <title>Identification and characterization of RsmE, the founding member of a new RNA base methyltransferase family.</title>
        <authorList>
            <person name="Basturea G.N."/>
            <person name="Rudd K.E."/>
            <person name="Deutscher M.P."/>
        </authorList>
    </citation>
    <scope>FUNCTION AS METHYLTRANSFERASE</scope>
    <scope>CATALYTIC ACTIVITY</scope>
    <source>
        <strain>K12 / MG1655 / ATCC 47076</strain>
    </source>
</reference>
<reference key="7">
    <citation type="journal article" date="2007" name="RNA">
        <title>Substrate specificity and properties of the Escherichia coli 16S rRNA methyltransferase, RsmE.</title>
        <authorList>
            <person name="Basturea G.N."/>
            <person name="Deutscher M.P."/>
        </authorList>
    </citation>
    <scope>FUNCTION</scope>
    <scope>SUBUNIT</scope>
    <scope>BIOPHYSICOCHEMICAL PROPERTIES</scope>
</reference>
<dbReference type="EC" id="2.1.1.193"/>
<dbReference type="EMBL" id="U28377">
    <property type="protein sequence ID" value="AAA69113.1"/>
    <property type="status" value="ALT_INIT"/>
    <property type="molecule type" value="Genomic_DNA"/>
</dbReference>
<dbReference type="EMBL" id="U00096">
    <property type="protein sequence ID" value="AAC75983.2"/>
    <property type="molecule type" value="Genomic_DNA"/>
</dbReference>
<dbReference type="EMBL" id="AP009048">
    <property type="protein sequence ID" value="BAE77009.1"/>
    <property type="molecule type" value="Genomic_DNA"/>
</dbReference>
<dbReference type="EMBL" id="X65169">
    <property type="status" value="NOT_ANNOTATED_CDS"/>
    <property type="molecule type" value="Genomic_DNA"/>
</dbReference>
<dbReference type="EMBL" id="X01666">
    <property type="status" value="NOT_ANNOTATED_CDS"/>
    <property type="molecule type" value="Genomic_DNA"/>
</dbReference>
<dbReference type="RefSeq" id="NP_417421.4">
    <property type="nucleotide sequence ID" value="NC_000913.3"/>
</dbReference>
<dbReference type="RefSeq" id="WP_001222509.1">
    <property type="nucleotide sequence ID" value="NZ_SSUR01000013.1"/>
</dbReference>
<dbReference type="PDB" id="4E8B">
    <property type="method" value="X-ray"/>
    <property type="resolution" value="2.25 A"/>
    <property type="chains" value="A=1-243"/>
</dbReference>
<dbReference type="PDBsum" id="4E8B"/>
<dbReference type="SMR" id="P0AGL7"/>
<dbReference type="BioGRID" id="4259407">
    <property type="interactions" value="27"/>
</dbReference>
<dbReference type="FunCoup" id="P0AGL7">
    <property type="interactions" value="437"/>
</dbReference>
<dbReference type="IntAct" id="P0AGL7">
    <property type="interactions" value="5"/>
</dbReference>
<dbReference type="STRING" id="511145.b2946"/>
<dbReference type="jPOST" id="P0AGL7"/>
<dbReference type="PaxDb" id="511145-b2946"/>
<dbReference type="EnsemblBacteria" id="AAC75983">
    <property type="protein sequence ID" value="AAC75983"/>
    <property type="gene ID" value="b2946"/>
</dbReference>
<dbReference type="GeneID" id="75173052"/>
<dbReference type="GeneID" id="945816"/>
<dbReference type="KEGG" id="ecj:JW2913"/>
<dbReference type="KEGG" id="eco:b2946"/>
<dbReference type="KEGG" id="ecoc:C3026_16125"/>
<dbReference type="PATRIC" id="fig|1411691.4.peg.3787"/>
<dbReference type="EchoBASE" id="EB2269"/>
<dbReference type="eggNOG" id="COG1385">
    <property type="taxonomic scope" value="Bacteria"/>
</dbReference>
<dbReference type="HOGENOM" id="CLU_067442_5_1_6"/>
<dbReference type="InParanoid" id="P0AGL7"/>
<dbReference type="OMA" id="RCITQWK"/>
<dbReference type="OrthoDB" id="9815641at2"/>
<dbReference type="PhylomeDB" id="P0AGL7"/>
<dbReference type="BioCyc" id="EcoCyc:EG12366-MONOMER"/>
<dbReference type="BioCyc" id="MetaCyc:EG12366-MONOMER"/>
<dbReference type="BRENDA" id="2.1.1.193">
    <property type="organism ID" value="2026"/>
</dbReference>
<dbReference type="EvolutionaryTrace" id="P0AGL7"/>
<dbReference type="PRO" id="PR:P0AGL7"/>
<dbReference type="Proteomes" id="UP000000625">
    <property type="component" value="Chromosome"/>
</dbReference>
<dbReference type="GO" id="GO:0005737">
    <property type="term" value="C:cytoplasm"/>
    <property type="evidence" value="ECO:0007669"/>
    <property type="project" value="UniProtKB-SubCell"/>
</dbReference>
<dbReference type="GO" id="GO:0042803">
    <property type="term" value="F:protein homodimerization activity"/>
    <property type="evidence" value="ECO:0000314"/>
    <property type="project" value="EcoCyc"/>
</dbReference>
<dbReference type="GO" id="GO:0070042">
    <property type="term" value="F:rRNA (uridine-N3-)-methyltransferase activity"/>
    <property type="evidence" value="ECO:0000314"/>
    <property type="project" value="EcoCyc"/>
</dbReference>
<dbReference type="GO" id="GO:0070475">
    <property type="term" value="P:rRNA base methylation"/>
    <property type="evidence" value="ECO:0000315"/>
    <property type="project" value="EcoCyc"/>
</dbReference>
<dbReference type="CDD" id="cd18084">
    <property type="entry name" value="RsmE-like"/>
    <property type="match status" value="1"/>
</dbReference>
<dbReference type="FunFam" id="2.40.240.20:FF:000001">
    <property type="entry name" value="Ribosomal RNA small subunit methyltransferase E"/>
    <property type="match status" value="1"/>
</dbReference>
<dbReference type="FunFam" id="3.40.1280.10:FF:000007">
    <property type="entry name" value="Ribosomal RNA small subunit methyltransferase E"/>
    <property type="match status" value="1"/>
</dbReference>
<dbReference type="Gene3D" id="3.40.1280.10">
    <property type="match status" value="1"/>
</dbReference>
<dbReference type="Gene3D" id="2.40.240.20">
    <property type="entry name" value="Hypothetical PUA domain-like, domain 1"/>
    <property type="match status" value="1"/>
</dbReference>
<dbReference type="InterPro" id="IPR029028">
    <property type="entry name" value="Alpha/beta_knot_MTases"/>
</dbReference>
<dbReference type="InterPro" id="IPR015947">
    <property type="entry name" value="PUA-like_sf"/>
</dbReference>
<dbReference type="InterPro" id="IPR006700">
    <property type="entry name" value="RsmE"/>
</dbReference>
<dbReference type="InterPro" id="IPR046886">
    <property type="entry name" value="RsmE_MTase_dom"/>
</dbReference>
<dbReference type="InterPro" id="IPR046887">
    <property type="entry name" value="RsmE_PUA-like"/>
</dbReference>
<dbReference type="InterPro" id="IPR029026">
    <property type="entry name" value="tRNA_m1G_MTases_N"/>
</dbReference>
<dbReference type="NCBIfam" id="NF008690">
    <property type="entry name" value="PRK11713.1-1"/>
    <property type="match status" value="1"/>
</dbReference>
<dbReference type="NCBIfam" id="NF008692">
    <property type="entry name" value="PRK11713.1-5"/>
    <property type="match status" value="1"/>
</dbReference>
<dbReference type="NCBIfam" id="TIGR00046">
    <property type="entry name" value="RsmE family RNA methyltransferase"/>
    <property type="match status" value="1"/>
</dbReference>
<dbReference type="PANTHER" id="PTHR30027:SF3">
    <property type="entry name" value="16S RRNA (URACIL(1498)-N(3))-METHYLTRANSFERASE"/>
    <property type="match status" value="1"/>
</dbReference>
<dbReference type="PANTHER" id="PTHR30027">
    <property type="entry name" value="RIBOSOMAL RNA SMALL SUBUNIT METHYLTRANSFERASE E"/>
    <property type="match status" value="1"/>
</dbReference>
<dbReference type="Pfam" id="PF04452">
    <property type="entry name" value="Methyltrans_RNA"/>
    <property type="match status" value="1"/>
</dbReference>
<dbReference type="Pfam" id="PF20260">
    <property type="entry name" value="PUA_4"/>
    <property type="match status" value="1"/>
</dbReference>
<dbReference type="PIRSF" id="PIRSF015601">
    <property type="entry name" value="MTase_slr0722"/>
    <property type="match status" value="1"/>
</dbReference>
<dbReference type="SUPFAM" id="SSF75217">
    <property type="entry name" value="alpha/beta knot"/>
    <property type="match status" value="1"/>
</dbReference>
<dbReference type="SUPFAM" id="SSF88697">
    <property type="entry name" value="PUA domain-like"/>
    <property type="match status" value="1"/>
</dbReference>
<accession>P0AGL7</accession>
<accession>P37912</accession>
<accession>P76647</accession>
<accession>Q2M9P7</accession>
<proteinExistence type="evidence at protein level"/>
<gene>
    <name type="primary">rsmE</name>
    <name type="synonym">yggJ</name>
    <name type="ordered locus">b2946</name>
    <name type="ordered locus">JW2913</name>
</gene>
<organism>
    <name type="scientific">Escherichia coli (strain K12)</name>
    <dbReference type="NCBI Taxonomy" id="83333"/>
    <lineage>
        <taxon>Bacteria</taxon>
        <taxon>Pseudomonadati</taxon>
        <taxon>Pseudomonadota</taxon>
        <taxon>Gammaproteobacteria</taxon>
        <taxon>Enterobacterales</taxon>
        <taxon>Enterobacteriaceae</taxon>
        <taxon>Escherichia</taxon>
    </lineage>
</organism>
<comment type="function">
    <text evidence="1 2">Specifically methylates the N3 position of the uracil ring of uridine 1498 (m3U1498) in 16S rRNA. Acts on the fully assembled 30S ribosomal subunit.</text>
</comment>
<comment type="catalytic activity">
    <reaction evidence="1">
        <text>uridine(1498) in 16S rRNA + S-adenosyl-L-methionine = N(3)-methyluridine(1498) in 16S rRNA + S-adenosyl-L-homocysteine + H(+)</text>
        <dbReference type="Rhea" id="RHEA:42920"/>
        <dbReference type="Rhea" id="RHEA-COMP:10283"/>
        <dbReference type="Rhea" id="RHEA-COMP:10284"/>
        <dbReference type="ChEBI" id="CHEBI:15378"/>
        <dbReference type="ChEBI" id="CHEBI:57856"/>
        <dbReference type="ChEBI" id="CHEBI:59789"/>
        <dbReference type="ChEBI" id="CHEBI:65315"/>
        <dbReference type="ChEBI" id="CHEBI:74502"/>
        <dbReference type="EC" id="2.1.1.193"/>
    </reaction>
</comment>
<comment type="biophysicochemical properties">
    <kinetics>
        <KM evidence="2">2 uM for 16S rRNA within 30S ribosomal subunits</KM>
        <KM evidence="2">26.7 uM for S-adenosyl-L-methionine</KM>
    </kinetics>
    <phDependence>
        <text evidence="2">Optimum pH is 7-9.</text>
    </phDependence>
</comment>
<comment type="subunit">
    <text evidence="2">Homodimer.</text>
</comment>
<comment type="subcellular location">
    <subcellularLocation>
        <location evidence="3">Cytoplasm</location>
    </subcellularLocation>
</comment>
<comment type="similarity">
    <text evidence="3">Belongs to the RNA methyltransferase RsmE family.</text>
</comment>
<comment type="sequence caution" evidence="3">
    <conflict type="erroneous initiation">
        <sequence resource="EMBL-CDS" id="AAA69113"/>
    </conflict>
    <text>Extended N-terminus.</text>
</comment>
<sequence length="243" mass="26978">MRIPRIYHPEPLTSHSHIALCEDAANHIGRVLRMGPGQALQLFDGSNQVFDAEITSASKKSVEVKVLEGQIDDRESPLHIHLGQVMSRGEKMEFTIQKSIELGVSLITPLFSERCGVKLDSERLNKKLQQWQKIAIAACEQCGRNRVPEIRPAMDLEAWCAEQDEGLKLNLHPRASNSINTLPLPVERVRLLIGPEGGLSADEIAMTARYQFTDILLGPRVLRTETTALTAITALQVRFGDLG</sequence>
<feature type="chain" id="PRO_0000176199" description="Ribosomal RNA small subunit methyltransferase E">
    <location>
        <begin position="1"/>
        <end position="243"/>
    </location>
</feature>
<feature type="strand" evidence="4">
    <location>
        <begin position="5"/>
        <end position="7"/>
    </location>
</feature>
<feature type="strand" evidence="4">
    <location>
        <begin position="17"/>
        <end position="19"/>
    </location>
</feature>
<feature type="helix" evidence="4">
    <location>
        <begin position="22"/>
        <end position="29"/>
    </location>
</feature>
<feature type="strand" evidence="4">
    <location>
        <begin position="39"/>
        <end position="43"/>
    </location>
</feature>
<feature type="strand" evidence="4">
    <location>
        <begin position="45"/>
        <end position="57"/>
    </location>
</feature>
<feature type="strand" evidence="4">
    <location>
        <begin position="62"/>
        <end position="71"/>
    </location>
</feature>
<feature type="strand" evidence="4">
    <location>
        <begin position="77"/>
        <end position="85"/>
    </location>
</feature>
<feature type="strand" evidence="4">
    <location>
        <begin position="88"/>
        <end position="90"/>
    </location>
</feature>
<feature type="helix" evidence="4">
    <location>
        <begin position="91"/>
        <end position="101"/>
    </location>
</feature>
<feature type="strand" evidence="4">
    <location>
        <begin position="106"/>
        <end position="111"/>
    </location>
</feature>
<feature type="helix" evidence="4">
    <location>
        <begin position="121"/>
        <end position="142"/>
    </location>
</feature>
<feature type="helix" evidence="4">
    <location>
        <begin position="156"/>
        <end position="161"/>
    </location>
</feature>
<feature type="strand" evidence="4">
    <location>
        <begin position="165"/>
        <end position="171"/>
    </location>
</feature>
<feature type="strand" evidence="4">
    <location>
        <begin position="176"/>
        <end position="178"/>
    </location>
</feature>
<feature type="helix" evidence="4">
    <location>
        <begin position="179"/>
        <end position="181"/>
    </location>
</feature>
<feature type="strand" evidence="4">
    <location>
        <begin position="188"/>
        <end position="193"/>
    </location>
</feature>
<feature type="helix" evidence="4">
    <location>
        <begin position="201"/>
        <end position="209"/>
    </location>
</feature>
<feature type="strand" evidence="4">
    <location>
        <begin position="213"/>
        <end position="216"/>
    </location>
</feature>
<feature type="helix" evidence="4">
    <location>
        <begin position="224"/>
        <end position="238"/>
    </location>
</feature>